<keyword id="KW-0002">3D-structure</keyword>
<keyword id="KW-1185">Reference proteome</keyword>
<keyword id="KW-0687">Ribonucleoprotein</keyword>
<keyword id="KW-0689">Ribosomal protein</keyword>
<gene>
    <name type="primary">RPL7</name>
    <name type="ordered locus">ECU03_0950</name>
</gene>
<organism>
    <name type="scientific">Encephalitozoon cuniculi (strain GB-M1)</name>
    <name type="common">Microsporidian parasite</name>
    <dbReference type="NCBI Taxonomy" id="284813"/>
    <lineage>
        <taxon>Eukaryota</taxon>
        <taxon>Fungi</taxon>
        <taxon>Fungi incertae sedis</taxon>
        <taxon>Microsporidia</taxon>
        <taxon>Unikaryonidae</taxon>
        <taxon>Encephalitozoon</taxon>
    </lineage>
</organism>
<name>RL7_ENCCU</name>
<protein>
    <recommendedName>
        <fullName evidence="2">Large ribosomal subunit protein uL30</fullName>
    </recommendedName>
    <alternativeName>
        <fullName>60S ribosomal protein L7</fullName>
    </alternativeName>
</protein>
<sequence length="239" mass="27934">MEGVMSEAPQSSIRKKEYEARMSRIRSRQEKEFRERKSANARYAEETTEKLLNKYYEQEREILEKKSSMKNGFYVPKEAEFFAVILIRSKCNCPPKVRKVLELFRLKRINTCVLVRNNKSTRKMLQIIKDHVAFGTIGMELLRKLVYTKGSGRNGHVRVKLTNEFIEDMFDGKIRCIEELVHHIYNGTEMFKKVNSFLYPFHLSPPRGGFKGQKSKSFNDGGSVGNHQDLLSNLLERMI</sequence>
<reference key="1">
    <citation type="journal article" date="2001" name="Nature">
        <title>Genome sequence and gene compaction of the eukaryote parasite Encephalitozoon cuniculi.</title>
        <authorList>
            <person name="Katinka M.D."/>
            <person name="Duprat S."/>
            <person name="Cornillot E."/>
            <person name="Metenier G."/>
            <person name="Thomarat F."/>
            <person name="Prensier G."/>
            <person name="Barbe V."/>
            <person name="Peyretaillade E."/>
            <person name="Brottier P."/>
            <person name="Wincker P."/>
            <person name="Delbac F."/>
            <person name="El Alaoui H."/>
            <person name="Peyret P."/>
            <person name="Saurin W."/>
            <person name="Gouy M."/>
            <person name="Weissenbach J."/>
            <person name="Vivares C.P."/>
        </authorList>
    </citation>
    <scope>NUCLEOTIDE SEQUENCE [LARGE SCALE GENOMIC DNA]</scope>
    <source>
        <strain>GB-M1</strain>
    </source>
</reference>
<accession>Q8SS93</accession>
<proteinExistence type="evidence at protein level"/>
<feature type="chain" id="PRO_0000104645" description="Large ribosomal subunit protein uL30">
    <location>
        <begin position="1"/>
        <end position="239"/>
    </location>
</feature>
<feature type="region of interest" description="Disordered" evidence="1">
    <location>
        <begin position="1"/>
        <end position="22"/>
    </location>
</feature>
<evidence type="ECO:0000256" key="1">
    <source>
        <dbReference type="SAM" id="MobiDB-lite"/>
    </source>
</evidence>
<evidence type="ECO:0000305" key="2"/>
<dbReference type="EMBL" id="AL590443">
    <property type="protein sequence ID" value="CAD26239.1"/>
    <property type="molecule type" value="Genomic_DNA"/>
</dbReference>
<dbReference type="RefSeq" id="NP_597604.1">
    <property type="nucleotide sequence ID" value="NM_001040968.1"/>
</dbReference>
<dbReference type="PDB" id="7QEP">
    <property type="method" value="EM"/>
    <property type="resolution" value="2.70 A"/>
    <property type="chains" value="L7=1-239"/>
</dbReference>
<dbReference type="PDBsum" id="7QEP"/>
<dbReference type="EMDB" id="EMD-13936"/>
<dbReference type="SMR" id="Q8SS93"/>
<dbReference type="FunCoup" id="Q8SS93">
    <property type="interactions" value="219"/>
</dbReference>
<dbReference type="STRING" id="284813.Q8SS93"/>
<dbReference type="GeneID" id="858766"/>
<dbReference type="KEGG" id="ecu:ECU03_0950"/>
<dbReference type="VEuPathDB" id="MicrosporidiaDB:ECU03_0950"/>
<dbReference type="HOGENOM" id="CLU_055156_0_0_1"/>
<dbReference type="InParanoid" id="Q8SS93"/>
<dbReference type="OMA" id="SYYVDAQ"/>
<dbReference type="OrthoDB" id="28644at2759"/>
<dbReference type="Proteomes" id="UP000000819">
    <property type="component" value="Chromosome III"/>
</dbReference>
<dbReference type="GO" id="GO:0022625">
    <property type="term" value="C:cytosolic large ribosomal subunit"/>
    <property type="evidence" value="ECO:0007669"/>
    <property type="project" value="TreeGrafter"/>
</dbReference>
<dbReference type="GO" id="GO:0003723">
    <property type="term" value="F:RNA binding"/>
    <property type="evidence" value="ECO:0007669"/>
    <property type="project" value="TreeGrafter"/>
</dbReference>
<dbReference type="GO" id="GO:0003735">
    <property type="term" value="F:structural constituent of ribosome"/>
    <property type="evidence" value="ECO:0007669"/>
    <property type="project" value="TreeGrafter"/>
</dbReference>
<dbReference type="GO" id="GO:0000463">
    <property type="term" value="P:maturation of LSU-rRNA from tricistronic rRNA transcript (SSU-rRNA, 5.8S rRNA, LSU-rRNA)"/>
    <property type="evidence" value="ECO:0007669"/>
    <property type="project" value="TreeGrafter"/>
</dbReference>
<dbReference type="CDD" id="cd01657">
    <property type="entry name" value="Ribosomal_L7_archeal_euk"/>
    <property type="match status" value="1"/>
</dbReference>
<dbReference type="FunFam" id="3.30.1390.20:FF:000004">
    <property type="entry name" value="60S ribosomal protein L7"/>
    <property type="match status" value="1"/>
</dbReference>
<dbReference type="Gene3D" id="1.10.15.30">
    <property type="match status" value="1"/>
</dbReference>
<dbReference type="Gene3D" id="3.30.1390.20">
    <property type="entry name" value="Ribosomal protein L30, ferredoxin-like fold domain"/>
    <property type="match status" value="1"/>
</dbReference>
<dbReference type="InterPro" id="IPR036919">
    <property type="entry name" value="Ribo_uL30_ferredoxin-like_sf"/>
</dbReference>
<dbReference type="InterPro" id="IPR039699">
    <property type="entry name" value="Ribosomal_uL30"/>
</dbReference>
<dbReference type="InterPro" id="IPR035808">
    <property type="entry name" value="Ribosomal_uL30_euk_arc"/>
</dbReference>
<dbReference type="InterPro" id="IPR016082">
    <property type="entry name" value="Ribosomal_uL30_ferredoxin-like"/>
</dbReference>
<dbReference type="PANTHER" id="PTHR11524">
    <property type="entry name" value="60S RIBOSOMAL PROTEIN L7"/>
    <property type="match status" value="1"/>
</dbReference>
<dbReference type="PANTHER" id="PTHR11524:SF16">
    <property type="entry name" value="LARGE RIBOSOMAL SUBUNIT PROTEIN UL30"/>
    <property type="match status" value="1"/>
</dbReference>
<dbReference type="Pfam" id="PF00327">
    <property type="entry name" value="Ribosomal_L30"/>
    <property type="match status" value="1"/>
</dbReference>
<dbReference type="SUPFAM" id="SSF55129">
    <property type="entry name" value="Ribosomal protein L30p/L7e"/>
    <property type="match status" value="1"/>
</dbReference>
<comment type="similarity">
    <text evidence="2">Belongs to the universal ribosomal protein uL30 family.</text>
</comment>